<sequence length="231" mass="26010">MGQKINPIGLRLGINRTWDSRWYAGKAEYGRLLHEDVKIRELLHKELKQAAVARIVIERPHKKCRVTIHSARPGVVIGKKGADIDKLRKRVADITSSDVVLNIVEIRKPELDATLVAESIAQQLERRVAFRRAMKRAVQSAMRLGAEGIRINCSGRLGGAEIARMEWYREGRVPLHTLRADVDYGVATAFTTFGTCGVKVWIFKGEILEHDPMAQDKRQAGDDSRPRRDAA</sequence>
<protein>
    <recommendedName>
        <fullName evidence="1">Small ribosomal subunit protein uS3</fullName>
    </recommendedName>
    <alternativeName>
        <fullName evidence="2">30S ribosomal protein S3</fullName>
    </alternativeName>
</protein>
<organism>
    <name type="scientific">Nitrobacter winogradskyi (strain ATCC 25391 / DSM 10237 / CIP 104748 / NCIMB 11846 / Nb-255)</name>
    <dbReference type="NCBI Taxonomy" id="323098"/>
    <lineage>
        <taxon>Bacteria</taxon>
        <taxon>Pseudomonadati</taxon>
        <taxon>Pseudomonadota</taxon>
        <taxon>Alphaproteobacteria</taxon>
        <taxon>Hyphomicrobiales</taxon>
        <taxon>Nitrobacteraceae</taxon>
        <taxon>Nitrobacter</taxon>
    </lineage>
</organism>
<accession>Q3SSW0</accession>
<feature type="chain" id="PRO_0000230707" description="Small ribosomal subunit protein uS3">
    <location>
        <begin position="1"/>
        <end position="231"/>
    </location>
</feature>
<feature type="domain" description="KH type-2" evidence="1">
    <location>
        <begin position="39"/>
        <end position="107"/>
    </location>
</feature>
<reference key="1">
    <citation type="journal article" date="2006" name="Appl. Environ. Microbiol.">
        <title>Genome sequence of the chemolithoautotrophic nitrite-oxidizing bacterium Nitrobacter winogradskyi Nb-255.</title>
        <authorList>
            <person name="Starkenburg S.R."/>
            <person name="Chain P.S.G."/>
            <person name="Sayavedra-Soto L.A."/>
            <person name="Hauser L."/>
            <person name="Land M.L."/>
            <person name="Larimer F.W."/>
            <person name="Malfatti S.A."/>
            <person name="Klotz M.G."/>
            <person name="Bottomley P.J."/>
            <person name="Arp D.J."/>
            <person name="Hickey W.J."/>
        </authorList>
    </citation>
    <scope>NUCLEOTIDE SEQUENCE [LARGE SCALE GENOMIC DNA]</scope>
    <source>
        <strain>ATCC 25391 / DSM 10237 / CIP 104748 / NCIMB 11846 / Nb-255</strain>
    </source>
</reference>
<keyword id="KW-1185">Reference proteome</keyword>
<keyword id="KW-0687">Ribonucleoprotein</keyword>
<keyword id="KW-0689">Ribosomal protein</keyword>
<keyword id="KW-0694">RNA-binding</keyword>
<keyword id="KW-0699">rRNA-binding</keyword>
<evidence type="ECO:0000255" key="1">
    <source>
        <dbReference type="HAMAP-Rule" id="MF_01309"/>
    </source>
</evidence>
<evidence type="ECO:0000305" key="2"/>
<gene>
    <name evidence="1" type="primary">rpsC</name>
    <name type="ordered locus">Nwi_1370</name>
</gene>
<name>RS3_NITWN</name>
<comment type="function">
    <text evidence="1">Binds the lower part of the 30S subunit head. Binds mRNA in the 70S ribosome, positioning it for translation.</text>
</comment>
<comment type="subunit">
    <text evidence="1">Part of the 30S ribosomal subunit. Forms a tight complex with proteins S10 and S14.</text>
</comment>
<comment type="similarity">
    <text evidence="1">Belongs to the universal ribosomal protein uS3 family.</text>
</comment>
<proteinExistence type="inferred from homology"/>
<dbReference type="EMBL" id="CP000115">
    <property type="protein sequence ID" value="ABA04631.1"/>
    <property type="molecule type" value="Genomic_DNA"/>
</dbReference>
<dbReference type="RefSeq" id="WP_011314645.1">
    <property type="nucleotide sequence ID" value="NC_007406.1"/>
</dbReference>
<dbReference type="SMR" id="Q3SSW0"/>
<dbReference type="STRING" id="323098.Nwi_1370"/>
<dbReference type="KEGG" id="nwi:Nwi_1370"/>
<dbReference type="eggNOG" id="COG0092">
    <property type="taxonomic scope" value="Bacteria"/>
</dbReference>
<dbReference type="HOGENOM" id="CLU_058591_0_2_5"/>
<dbReference type="OrthoDB" id="9806396at2"/>
<dbReference type="Proteomes" id="UP000002531">
    <property type="component" value="Chromosome"/>
</dbReference>
<dbReference type="GO" id="GO:0022627">
    <property type="term" value="C:cytosolic small ribosomal subunit"/>
    <property type="evidence" value="ECO:0007669"/>
    <property type="project" value="TreeGrafter"/>
</dbReference>
<dbReference type="GO" id="GO:0003729">
    <property type="term" value="F:mRNA binding"/>
    <property type="evidence" value="ECO:0007669"/>
    <property type="project" value="UniProtKB-UniRule"/>
</dbReference>
<dbReference type="GO" id="GO:0019843">
    <property type="term" value="F:rRNA binding"/>
    <property type="evidence" value="ECO:0007669"/>
    <property type="project" value="UniProtKB-UniRule"/>
</dbReference>
<dbReference type="GO" id="GO:0003735">
    <property type="term" value="F:structural constituent of ribosome"/>
    <property type="evidence" value="ECO:0007669"/>
    <property type="project" value="InterPro"/>
</dbReference>
<dbReference type="GO" id="GO:0006412">
    <property type="term" value="P:translation"/>
    <property type="evidence" value="ECO:0007669"/>
    <property type="project" value="UniProtKB-UniRule"/>
</dbReference>
<dbReference type="CDD" id="cd02412">
    <property type="entry name" value="KH-II_30S_S3"/>
    <property type="match status" value="1"/>
</dbReference>
<dbReference type="FunFam" id="3.30.1140.32:FF:000009">
    <property type="entry name" value="30S ribosomal protein S3"/>
    <property type="match status" value="1"/>
</dbReference>
<dbReference type="FunFam" id="3.30.300.20:FF:000001">
    <property type="entry name" value="30S ribosomal protein S3"/>
    <property type="match status" value="1"/>
</dbReference>
<dbReference type="Gene3D" id="3.30.300.20">
    <property type="match status" value="1"/>
</dbReference>
<dbReference type="Gene3D" id="3.30.1140.32">
    <property type="entry name" value="Ribosomal protein S3, C-terminal domain"/>
    <property type="match status" value="1"/>
</dbReference>
<dbReference type="HAMAP" id="MF_01309_B">
    <property type="entry name" value="Ribosomal_uS3_B"/>
    <property type="match status" value="1"/>
</dbReference>
<dbReference type="InterPro" id="IPR004087">
    <property type="entry name" value="KH_dom"/>
</dbReference>
<dbReference type="InterPro" id="IPR015946">
    <property type="entry name" value="KH_dom-like_a/b"/>
</dbReference>
<dbReference type="InterPro" id="IPR004044">
    <property type="entry name" value="KH_dom_type_2"/>
</dbReference>
<dbReference type="InterPro" id="IPR009019">
    <property type="entry name" value="KH_sf_prok-type"/>
</dbReference>
<dbReference type="InterPro" id="IPR036419">
    <property type="entry name" value="Ribosomal_S3_C_sf"/>
</dbReference>
<dbReference type="InterPro" id="IPR005704">
    <property type="entry name" value="Ribosomal_uS3_bac-typ"/>
</dbReference>
<dbReference type="InterPro" id="IPR001351">
    <property type="entry name" value="Ribosomal_uS3_C"/>
</dbReference>
<dbReference type="InterPro" id="IPR018280">
    <property type="entry name" value="Ribosomal_uS3_CS"/>
</dbReference>
<dbReference type="NCBIfam" id="TIGR01009">
    <property type="entry name" value="rpsC_bact"/>
    <property type="match status" value="1"/>
</dbReference>
<dbReference type="PANTHER" id="PTHR11760">
    <property type="entry name" value="30S/40S RIBOSOMAL PROTEIN S3"/>
    <property type="match status" value="1"/>
</dbReference>
<dbReference type="PANTHER" id="PTHR11760:SF19">
    <property type="entry name" value="SMALL RIBOSOMAL SUBUNIT PROTEIN US3C"/>
    <property type="match status" value="1"/>
</dbReference>
<dbReference type="Pfam" id="PF07650">
    <property type="entry name" value="KH_2"/>
    <property type="match status" value="1"/>
</dbReference>
<dbReference type="Pfam" id="PF00189">
    <property type="entry name" value="Ribosomal_S3_C"/>
    <property type="match status" value="1"/>
</dbReference>
<dbReference type="SMART" id="SM00322">
    <property type="entry name" value="KH"/>
    <property type="match status" value="1"/>
</dbReference>
<dbReference type="SUPFAM" id="SSF54814">
    <property type="entry name" value="Prokaryotic type KH domain (KH-domain type II)"/>
    <property type="match status" value="1"/>
</dbReference>
<dbReference type="SUPFAM" id="SSF54821">
    <property type="entry name" value="Ribosomal protein S3 C-terminal domain"/>
    <property type="match status" value="1"/>
</dbReference>
<dbReference type="PROSITE" id="PS50823">
    <property type="entry name" value="KH_TYPE_2"/>
    <property type="match status" value="1"/>
</dbReference>
<dbReference type="PROSITE" id="PS00548">
    <property type="entry name" value="RIBOSOMAL_S3"/>
    <property type="match status" value="1"/>
</dbReference>